<dbReference type="EMBL" id="AC018363">
    <property type="protein sequence ID" value="AAF26967.1"/>
    <property type="status" value="ALT_SEQ"/>
    <property type="molecule type" value="Genomic_DNA"/>
</dbReference>
<dbReference type="EMBL" id="CP002686">
    <property type="protein sequence ID" value="AEE73879.1"/>
    <property type="molecule type" value="Genomic_DNA"/>
</dbReference>
<dbReference type="EMBL" id="AK117794">
    <property type="protein sequence ID" value="BAC42439.1"/>
    <property type="molecule type" value="mRNA"/>
</dbReference>
<dbReference type="EMBL" id="BT024909">
    <property type="protein sequence ID" value="ABD91500.1"/>
    <property type="molecule type" value="mRNA"/>
</dbReference>
<dbReference type="EMBL" id="AY084806">
    <property type="protein sequence ID" value="AAM61372.1"/>
    <property type="molecule type" value="mRNA"/>
</dbReference>
<dbReference type="RefSeq" id="NP_566188.1">
    <molecule id="Q8LFJ8-1"/>
    <property type="nucleotide sequence ID" value="NM_111162.3"/>
</dbReference>
<dbReference type="SMR" id="Q8LFJ8"/>
<dbReference type="BioGRID" id="6520">
    <property type="interactions" value="1"/>
</dbReference>
<dbReference type="FunCoup" id="Q8LFJ8">
    <property type="interactions" value="3354"/>
</dbReference>
<dbReference type="STRING" id="3702.Q8LFJ8"/>
<dbReference type="GlyGen" id="Q8LFJ8">
    <property type="glycosylation" value="1 site"/>
</dbReference>
<dbReference type="iPTMnet" id="Q8LFJ8"/>
<dbReference type="PaxDb" id="3702-AT3G02920.2"/>
<dbReference type="ProteomicsDB" id="236893">
    <molecule id="Q8LFJ8-1"/>
</dbReference>
<dbReference type="EnsemblPlants" id="AT3G02920.1">
    <molecule id="Q8LFJ8-1"/>
    <property type="protein sequence ID" value="AT3G02920.1"/>
    <property type="gene ID" value="AT3G02920"/>
</dbReference>
<dbReference type="GeneID" id="821187"/>
<dbReference type="Gramene" id="AT3G02920.1">
    <molecule id="Q8LFJ8-1"/>
    <property type="protein sequence ID" value="AT3G02920.1"/>
    <property type="gene ID" value="AT3G02920"/>
</dbReference>
<dbReference type="KEGG" id="ath:AT3G02920"/>
<dbReference type="Araport" id="AT3G02920"/>
<dbReference type="TAIR" id="AT3G02920">
    <property type="gene designation" value="RPA32B"/>
</dbReference>
<dbReference type="eggNOG" id="KOG3108">
    <property type="taxonomic scope" value="Eukaryota"/>
</dbReference>
<dbReference type="HOGENOM" id="CLU_051033_3_1_1"/>
<dbReference type="InParanoid" id="Q8LFJ8"/>
<dbReference type="OMA" id="GRIECNK"/>
<dbReference type="PhylomeDB" id="Q8LFJ8"/>
<dbReference type="PRO" id="PR:Q8LFJ8"/>
<dbReference type="Proteomes" id="UP000006548">
    <property type="component" value="Chromosome 3"/>
</dbReference>
<dbReference type="ExpressionAtlas" id="Q8LFJ8">
    <property type="expression patterns" value="baseline and differential"/>
</dbReference>
<dbReference type="GO" id="GO:0005634">
    <property type="term" value="C:nucleus"/>
    <property type="evidence" value="ECO:0007669"/>
    <property type="project" value="UniProtKB-SubCell"/>
</dbReference>
<dbReference type="GO" id="GO:0003677">
    <property type="term" value="F:DNA binding"/>
    <property type="evidence" value="ECO:0007669"/>
    <property type="project" value="UniProtKB-KW"/>
</dbReference>
<dbReference type="GO" id="GO:0006310">
    <property type="term" value="P:DNA recombination"/>
    <property type="evidence" value="ECO:0007669"/>
    <property type="project" value="UniProtKB-KW"/>
</dbReference>
<dbReference type="GO" id="GO:0006281">
    <property type="term" value="P:DNA repair"/>
    <property type="evidence" value="ECO:0007669"/>
    <property type="project" value="UniProtKB-KW"/>
</dbReference>
<dbReference type="GO" id="GO:0006260">
    <property type="term" value="P:DNA replication"/>
    <property type="evidence" value="ECO:0007669"/>
    <property type="project" value="UniProtKB-KW"/>
</dbReference>
<dbReference type="CDD" id="cd04478">
    <property type="entry name" value="RPA2_DBD_D"/>
    <property type="match status" value="1"/>
</dbReference>
<dbReference type="FunFam" id="1.10.10.10:FF:000168">
    <property type="entry name" value="Replication protein A 32 kDa subunit"/>
    <property type="match status" value="1"/>
</dbReference>
<dbReference type="FunFam" id="2.40.50.140:FF:000184">
    <property type="entry name" value="replication protein A 32 kDa subunit A-like"/>
    <property type="match status" value="1"/>
</dbReference>
<dbReference type="Gene3D" id="2.40.50.140">
    <property type="entry name" value="Nucleic acid-binding proteins"/>
    <property type="match status" value="1"/>
</dbReference>
<dbReference type="Gene3D" id="1.10.10.10">
    <property type="entry name" value="Winged helix-like DNA-binding domain superfamily/Winged helix DNA-binding domain"/>
    <property type="match status" value="1"/>
</dbReference>
<dbReference type="InterPro" id="IPR012340">
    <property type="entry name" value="NA-bd_OB-fold"/>
</dbReference>
<dbReference type="InterPro" id="IPR004365">
    <property type="entry name" value="NA-bd_OB_tRNA"/>
</dbReference>
<dbReference type="InterPro" id="IPR040260">
    <property type="entry name" value="RFA2-like"/>
</dbReference>
<dbReference type="InterPro" id="IPR014646">
    <property type="entry name" value="Rfa2/RPA32"/>
</dbReference>
<dbReference type="InterPro" id="IPR014892">
    <property type="entry name" value="RPA_C"/>
</dbReference>
<dbReference type="InterPro" id="IPR036388">
    <property type="entry name" value="WH-like_DNA-bd_sf"/>
</dbReference>
<dbReference type="InterPro" id="IPR036390">
    <property type="entry name" value="WH_DNA-bd_sf"/>
</dbReference>
<dbReference type="PANTHER" id="PTHR13989">
    <property type="entry name" value="REPLICATION PROTEIN A-RELATED"/>
    <property type="match status" value="1"/>
</dbReference>
<dbReference type="PANTHER" id="PTHR13989:SF16">
    <property type="entry name" value="REPLICATION PROTEIN A2"/>
    <property type="match status" value="1"/>
</dbReference>
<dbReference type="Pfam" id="PF08784">
    <property type="entry name" value="RPA_C"/>
    <property type="match status" value="1"/>
</dbReference>
<dbReference type="Pfam" id="PF01336">
    <property type="entry name" value="tRNA_anti-codon"/>
    <property type="match status" value="1"/>
</dbReference>
<dbReference type="PIRSF" id="PIRSF036949">
    <property type="entry name" value="RPA32"/>
    <property type="match status" value="1"/>
</dbReference>
<dbReference type="SUPFAM" id="SSF50249">
    <property type="entry name" value="Nucleic acid-binding proteins"/>
    <property type="match status" value="1"/>
</dbReference>
<dbReference type="SUPFAM" id="SSF46785">
    <property type="entry name" value="Winged helix' DNA-binding domain"/>
    <property type="match status" value="1"/>
</dbReference>
<protein>
    <recommendedName>
        <fullName>Replication protein A 32 kDa subunit B</fullName>
        <shortName>AtRPA32B</shortName>
        <shortName>RP-A p32 B</shortName>
    </recommendedName>
    <alternativeName>
        <fullName>DNA replication protein A2 subunit B</fullName>
    </alternativeName>
    <alternativeName>
        <fullName>Replication factor A protein 2 B</fullName>
        <shortName>AtRPA2 B</shortName>
        <shortName>RF-A protein 2 B</shortName>
    </alternativeName>
    <alternativeName>
        <fullName>Replicon protein A2 B</fullName>
    </alternativeName>
</protein>
<keyword id="KW-0025">Alternative splicing</keyword>
<keyword id="KW-0227">DNA damage</keyword>
<keyword id="KW-0233">DNA recombination</keyword>
<keyword id="KW-0234">DNA repair</keyword>
<keyword id="KW-0235">DNA replication</keyword>
<keyword id="KW-0238">DNA-binding</keyword>
<keyword id="KW-0539">Nucleus</keyword>
<keyword id="KW-0597">Phosphoprotein</keyword>
<keyword id="KW-1185">Reference proteome</keyword>
<organism>
    <name type="scientific">Arabidopsis thaliana</name>
    <name type="common">Mouse-ear cress</name>
    <dbReference type="NCBI Taxonomy" id="3702"/>
    <lineage>
        <taxon>Eukaryota</taxon>
        <taxon>Viridiplantae</taxon>
        <taxon>Streptophyta</taxon>
        <taxon>Embryophyta</taxon>
        <taxon>Tracheophyta</taxon>
        <taxon>Spermatophyta</taxon>
        <taxon>Magnoliopsida</taxon>
        <taxon>eudicotyledons</taxon>
        <taxon>Gunneridae</taxon>
        <taxon>Pentapetalae</taxon>
        <taxon>rosids</taxon>
        <taxon>malvids</taxon>
        <taxon>Brassicales</taxon>
        <taxon>Brassicaceae</taxon>
        <taxon>Camelineae</taxon>
        <taxon>Arabidopsis</taxon>
    </lineage>
</organism>
<feature type="chain" id="PRO_0000419969" description="Replication protein A 32 kDa subunit B">
    <location>
        <begin position="1"/>
        <end position="278"/>
    </location>
</feature>
<feature type="DNA-binding region" description="OB">
    <location>
        <begin position="70"/>
        <end position="143"/>
    </location>
</feature>
<sequence length="278" mass="30957">MYGGDFDGNAAFAGGGFMPSQATTQAHESSSSLKNRDVRTLLPLTLKQLSSASTTGESNFSIDGVDIKTVVIVGRISRMENRITQVDFVVDDGTGWVDCVRWCHARQETEEMEAVKLGMYVRLHGHLKIFQGKRSVNVFSVRPVTDFNEIVHHFTECMYVHMYNTKLRGGSITQDTATPRPQMPYSTMPTPAKPYQTGPSNQFPNQFNDSMHGVKQTVLNYLNQPMHIVSEAGVHCDIIARELRIPLLQVKEALEQLSNDGCIYSTLDETCFKSTANA</sequence>
<name>RFA2B_ARATH</name>
<gene>
    <name type="primary">RPA2B</name>
    <name type="synonym">RPA32B</name>
    <name type="ordered locus">At3g02920</name>
    <name type="ORF">F13E7.13</name>
</gene>
<reference key="1">
    <citation type="journal article" date="2000" name="Nature">
        <title>Sequence and analysis of chromosome 3 of the plant Arabidopsis thaliana.</title>
        <authorList>
            <person name="Salanoubat M."/>
            <person name="Lemcke K."/>
            <person name="Rieger M."/>
            <person name="Ansorge W."/>
            <person name="Unseld M."/>
            <person name="Fartmann B."/>
            <person name="Valle G."/>
            <person name="Bloecker H."/>
            <person name="Perez-Alonso M."/>
            <person name="Obermaier B."/>
            <person name="Delseny M."/>
            <person name="Boutry M."/>
            <person name="Grivell L.A."/>
            <person name="Mache R."/>
            <person name="Puigdomenech P."/>
            <person name="De Simone V."/>
            <person name="Choisne N."/>
            <person name="Artiguenave F."/>
            <person name="Robert C."/>
            <person name="Brottier P."/>
            <person name="Wincker P."/>
            <person name="Cattolico L."/>
            <person name="Weissenbach J."/>
            <person name="Saurin W."/>
            <person name="Quetier F."/>
            <person name="Schaefer M."/>
            <person name="Mueller-Auer S."/>
            <person name="Gabel C."/>
            <person name="Fuchs M."/>
            <person name="Benes V."/>
            <person name="Wurmbach E."/>
            <person name="Drzonek H."/>
            <person name="Erfle H."/>
            <person name="Jordan N."/>
            <person name="Bangert S."/>
            <person name="Wiedelmann R."/>
            <person name="Kranz H."/>
            <person name="Voss H."/>
            <person name="Holland R."/>
            <person name="Brandt P."/>
            <person name="Nyakatura G."/>
            <person name="Vezzi A."/>
            <person name="D'Angelo M."/>
            <person name="Pallavicini A."/>
            <person name="Toppo S."/>
            <person name="Simionati B."/>
            <person name="Conrad A."/>
            <person name="Hornischer K."/>
            <person name="Kauer G."/>
            <person name="Loehnert T.-H."/>
            <person name="Nordsiek G."/>
            <person name="Reichelt J."/>
            <person name="Scharfe M."/>
            <person name="Schoen O."/>
            <person name="Bargues M."/>
            <person name="Terol J."/>
            <person name="Climent J."/>
            <person name="Navarro P."/>
            <person name="Collado C."/>
            <person name="Perez-Perez A."/>
            <person name="Ottenwaelder B."/>
            <person name="Duchemin D."/>
            <person name="Cooke R."/>
            <person name="Laudie M."/>
            <person name="Berger-Llauro C."/>
            <person name="Purnelle B."/>
            <person name="Masuy D."/>
            <person name="de Haan M."/>
            <person name="Maarse A.C."/>
            <person name="Alcaraz J.-P."/>
            <person name="Cottet A."/>
            <person name="Casacuberta E."/>
            <person name="Monfort A."/>
            <person name="Argiriou A."/>
            <person name="Flores M."/>
            <person name="Liguori R."/>
            <person name="Vitale D."/>
            <person name="Mannhaupt G."/>
            <person name="Haase D."/>
            <person name="Schoof H."/>
            <person name="Rudd S."/>
            <person name="Zaccaria P."/>
            <person name="Mewes H.-W."/>
            <person name="Mayer K.F.X."/>
            <person name="Kaul S."/>
            <person name="Town C.D."/>
            <person name="Koo H.L."/>
            <person name="Tallon L.J."/>
            <person name="Jenkins J."/>
            <person name="Rooney T."/>
            <person name="Rizzo M."/>
            <person name="Walts A."/>
            <person name="Utterback T."/>
            <person name="Fujii C.Y."/>
            <person name="Shea T.P."/>
            <person name="Creasy T.H."/>
            <person name="Haas B."/>
            <person name="Maiti R."/>
            <person name="Wu D."/>
            <person name="Peterson J."/>
            <person name="Van Aken S."/>
            <person name="Pai G."/>
            <person name="Militscher J."/>
            <person name="Sellers P."/>
            <person name="Gill J.E."/>
            <person name="Feldblyum T.V."/>
            <person name="Preuss D."/>
            <person name="Lin X."/>
            <person name="Nierman W.C."/>
            <person name="Salzberg S.L."/>
            <person name="White O."/>
            <person name="Venter J.C."/>
            <person name="Fraser C.M."/>
            <person name="Kaneko T."/>
            <person name="Nakamura Y."/>
            <person name="Sato S."/>
            <person name="Kato T."/>
            <person name="Asamizu E."/>
            <person name="Sasamoto S."/>
            <person name="Kimura T."/>
            <person name="Idesawa K."/>
            <person name="Kawashima K."/>
            <person name="Kishida Y."/>
            <person name="Kiyokawa C."/>
            <person name="Kohara M."/>
            <person name="Matsumoto M."/>
            <person name="Matsuno A."/>
            <person name="Muraki A."/>
            <person name="Nakayama S."/>
            <person name="Nakazaki N."/>
            <person name="Shinpo S."/>
            <person name="Takeuchi C."/>
            <person name="Wada T."/>
            <person name="Watanabe A."/>
            <person name="Yamada M."/>
            <person name="Yasuda M."/>
            <person name="Tabata S."/>
        </authorList>
    </citation>
    <scope>NUCLEOTIDE SEQUENCE [LARGE SCALE GENOMIC DNA]</scope>
    <source>
        <strain>cv. Columbia</strain>
    </source>
</reference>
<reference key="2">
    <citation type="journal article" date="2017" name="Plant J.">
        <title>Araport11: a complete reannotation of the Arabidopsis thaliana reference genome.</title>
        <authorList>
            <person name="Cheng C.Y."/>
            <person name="Krishnakumar V."/>
            <person name="Chan A.P."/>
            <person name="Thibaud-Nissen F."/>
            <person name="Schobel S."/>
            <person name="Town C.D."/>
        </authorList>
    </citation>
    <scope>GENOME REANNOTATION</scope>
    <source>
        <strain>cv. Columbia</strain>
    </source>
</reference>
<reference key="3">
    <citation type="journal article" date="2002" name="Science">
        <title>Functional annotation of a full-length Arabidopsis cDNA collection.</title>
        <authorList>
            <person name="Seki M."/>
            <person name="Narusaka M."/>
            <person name="Kamiya A."/>
            <person name="Ishida J."/>
            <person name="Satou M."/>
            <person name="Sakurai T."/>
            <person name="Nakajima M."/>
            <person name="Enju A."/>
            <person name="Akiyama K."/>
            <person name="Oono Y."/>
            <person name="Muramatsu M."/>
            <person name="Hayashizaki Y."/>
            <person name="Kawai J."/>
            <person name="Carninci P."/>
            <person name="Itoh M."/>
            <person name="Ishii Y."/>
            <person name="Arakawa T."/>
            <person name="Shibata K."/>
            <person name="Shinagawa A."/>
            <person name="Shinozaki K."/>
        </authorList>
    </citation>
    <scope>NUCLEOTIDE SEQUENCE [LARGE SCALE MRNA]</scope>
    <source>
        <strain>cv. Columbia</strain>
    </source>
</reference>
<reference key="4">
    <citation type="submission" date="2006-03" db="EMBL/GenBank/DDBJ databases">
        <title>Arabidopsis ORF clones.</title>
        <authorList>
            <person name="Shinn P."/>
            <person name="Chen H."/>
            <person name="Kim C.J."/>
            <person name="Ecker J.R."/>
        </authorList>
    </citation>
    <scope>NUCLEOTIDE SEQUENCE [LARGE SCALE MRNA]</scope>
    <source>
        <strain>cv. Columbia</strain>
    </source>
</reference>
<reference key="5">
    <citation type="submission" date="2002-03" db="EMBL/GenBank/DDBJ databases">
        <title>Full-length cDNA from Arabidopsis thaliana.</title>
        <authorList>
            <person name="Brover V.V."/>
            <person name="Troukhan M.E."/>
            <person name="Alexandrov N.A."/>
            <person name="Lu Y.-P."/>
            <person name="Flavell R.B."/>
            <person name="Feldmann K.A."/>
        </authorList>
    </citation>
    <scope>NUCLEOTIDE SEQUENCE [LARGE SCALE MRNA]</scope>
</reference>
<reference key="6">
    <citation type="journal article" date="2006" name="Plant Cell">
        <title>ROR1/RPA2A, a putative replication protein A2, functions in epigenetic gene silencing and in regulation of meristem development in Arabidopsis.</title>
        <authorList>
            <person name="Xia R."/>
            <person name="Wang J."/>
            <person name="Liu C."/>
            <person name="Wang Y."/>
            <person name="Wang Y."/>
            <person name="Zhai J."/>
            <person name="Liu J."/>
            <person name="Hong X."/>
            <person name="Cao X."/>
            <person name="Zhu J.-K."/>
            <person name="Gong Z."/>
        </authorList>
    </citation>
    <scope>GENE FAMILY</scope>
    <scope>NOMENCLATURE</scope>
    <source>
        <strain>cv. C24</strain>
        <strain>cv. Columbia</strain>
    </source>
</reference>
<evidence type="ECO:0000250" key="1"/>
<evidence type="ECO:0000305" key="2"/>
<accession>Q8LFJ8</accession>
<accession>Q9M8T4</accession>
<comment type="function">
    <text evidence="1">Component of the replication protein A complex (RPA) required for DNA recombination, repair and replication. The activity of RPA is mediated by single-stranded DNA binding and protein interactions. Required fo cell division in meristems. Involved in the maintenance of transcriptional epigenetic gene silencing (TGS) at specific loci (including some transposons) by regulating histone H3 acetylation, 'Lys-4' and 'Lys-9' methylation (By similarity).</text>
</comment>
<comment type="subunit">
    <text evidence="1">Heterotrimer of RPA1, RPA2 and RPA3 (canonical replication protein A complex).</text>
</comment>
<comment type="subcellular location">
    <subcellularLocation>
        <location evidence="2">Nucleus</location>
    </subcellularLocation>
    <text evidence="1">Redistributes to discrete nuclear foci upon DNA damage.</text>
</comment>
<comment type="alternative products">
    <event type="alternative splicing"/>
    <isoform>
        <id>Q8LFJ8-1</id>
        <name>1</name>
        <sequence type="displayed"/>
    </isoform>
    <text>Additional isoforms seem to exist.</text>
</comment>
<comment type="PTM">
    <text evidence="1">Phosphorylated in a cell-cycle-dependent manner (from the S phase until mitosis). In response to DNA damage, recruited to DNA-repair nuclear foci, as a hypophosphorylated form (By similarity).</text>
</comment>
<comment type="similarity">
    <text evidence="2">Belongs to the replication factor A protein 2 family.</text>
</comment>
<comment type="sequence caution" evidence="2">
    <conflict type="erroneous gene model prediction">
        <sequence resource="EMBL-CDS" id="AAF26967"/>
    </conflict>
</comment>
<proteinExistence type="evidence at transcript level"/>